<evidence type="ECO:0000255" key="1">
    <source>
        <dbReference type="HAMAP-Rule" id="MF_01343"/>
    </source>
</evidence>
<evidence type="ECO:0000305" key="2"/>
<keyword id="KW-0002">3D-structure</keyword>
<keyword id="KW-1185">Reference proteome</keyword>
<keyword id="KW-0687">Ribonucleoprotein</keyword>
<keyword id="KW-0689">Ribosomal protein</keyword>
<proteinExistence type="evidence at protein level"/>
<organism>
    <name type="scientific">Saccharolobus solfataricus (strain ATCC 35092 / DSM 1617 / JCM 11322 / P2)</name>
    <name type="common">Sulfolobus solfataricus</name>
    <dbReference type="NCBI Taxonomy" id="273057"/>
    <lineage>
        <taxon>Archaea</taxon>
        <taxon>Thermoproteota</taxon>
        <taxon>Thermoprotei</taxon>
        <taxon>Sulfolobales</taxon>
        <taxon>Sulfolobaceae</taxon>
        <taxon>Saccharolobus</taxon>
    </lineage>
</organism>
<accession>Q980A8</accession>
<reference key="1">
    <citation type="journal article" date="2001" name="Proc. Natl. Acad. Sci. U.S.A.">
        <title>The complete genome of the crenarchaeon Sulfolobus solfataricus P2.</title>
        <authorList>
            <person name="She Q."/>
            <person name="Singh R.K."/>
            <person name="Confalonieri F."/>
            <person name="Zivanovic Y."/>
            <person name="Allard G."/>
            <person name="Awayez M.J."/>
            <person name="Chan-Weiher C.C.-Y."/>
            <person name="Clausen I.G."/>
            <person name="Curtis B.A."/>
            <person name="De Moors A."/>
            <person name="Erauso G."/>
            <person name="Fletcher C."/>
            <person name="Gordon P.M.K."/>
            <person name="Heikamp-de Jong I."/>
            <person name="Jeffries A.C."/>
            <person name="Kozera C.J."/>
            <person name="Medina N."/>
            <person name="Peng X."/>
            <person name="Thi-Ngoc H.P."/>
            <person name="Redder P."/>
            <person name="Schenk M.E."/>
            <person name="Theriault C."/>
            <person name="Tolstrup N."/>
            <person name="Charlebois R.L."/>
            <person name="Doolittle W.F."/>
            <person name="Duguet M."/>
            <person name="Gaasterland T."/>
            <person name="Garrett R.A."/>
            <person name="Ragan M.A."/>
            <person name="Sensen C.W."/>
            <person name="Van der Oost J."/>
        </authorList>
    </citation>
    <scope>NUCLEOTIDE SEQUENCE [LARGE SCALE GENOMIC DNA]</scope>
    <source>
        <strain>ATCC 35092 / DSM 1617 / JCM 11322 / P2</strain>
    </source>
</reference>
<protein>
    <recommendedName>
        <fullName evidence="1">Small ribosomal subunit protein uS15</fullName>
    </recommendedName>
    <alternativeName>
        <fullName evidence="2">30S ribosomal protein S15</fullName>
    </alternativeName>
</protein>
<name>RS15_SACS2</name>
<comment type="subunit">
    <text evidence="1">Part of the 30S ribosomal subunit.</text>
</comment>
<comment type="similarity">
    <text evidence="1">Belongs to the universal ribosomal protein uS15 family.</text>
</comment>
<feature type="chain" id="PRO_0000115621" description="Small ribosomal subunit protein uS15">
    <location>
        <begin position="1"/>
        <end position="152"/>
    </location>
</feature>
<dbReference type="EMBL" id="AE006641">
    <property type="protein sequence ID" value="AAK40737.1"/>
    <property type="molecule type" value="Genomic_DNA"/>
</dbReference>
<dbReference type="PIR" id="B90185">
    <property type="entry name" value="B90185"/>
</dbReference>
<dbReference type="RefSeq" id="WP_009988775.1">
    <property type="nucleotide sequence ID" value="NC_002754.1"/>
</dbReference>
<dbReference type="PDB" id="9FHL">
    <property type="method" value="EM"/>
    <property type="resolution" value="2.50 A"/>
    <property type="chains" value="Q=1-152"/>
</dbReference>
<dbReference type="PDB" id="9FRA">
    <property type="method" value="EM"/>
    <property type="resolution" value="2.80 A"/>
    <property type="chains" value="Q=1-152"/>
</dbReference>
<dbReference type="PDB" id="9FRK">
    <property type="method" value="EM"/>
    <property type="resolution" value="3.00 A"/>
    <property type="chains" value="Q=1-152"/>
</dbReference>
<dbReference type="PDB" id="9FRL">
    <property type="method" value="EM"/>
    <property type="resolution" value="2.97 A"/>
    <property type="chains" value="Q=1-152"/>
</dbReference>
<dbReference type="PDB" id="9FS6">
    <property type="method" value="EM"/>
    <property type="resolution" value="2.90 A"/>
    <property type="chains" value="Q=1-152"/>
</dbReference>
<dbReference type="PDB" id="9FS8">
    <property type="method" value="EM"/>
    <property type="resolution" value="3.70 A"/>
    <property type="chains" value="Q=1-152"/>
</dbReference>
<dbReference type="PDB" id="9FSF">
    <property type="method" value="EM"/>
    <property type="resolution" value="2.80 A"/>
    <property type="chains" value="Q=1-152"/>
</dbReference>
<dbReference type="PDB" id="9FY0">
    <property type="method" value="EM"/>
    <property type="resolution" value="2.90 A"/>
    <property type="chains" value="Q=1-152"/>
</dbReference>
<dbReference type="PDBsum" id="9FHL"/>
<dbReference type="PDBsum" id="9FRA"/>
<dbReference type="PDBsum" id="9FRK"/>
<dbReference type="PDBsum" id="9FRL"/>
<dbReference type="PDBsum" id="9FS6"/>
<dbReference type="PDBsum" id="9FS8"/>
<dbReference type="PDBsum" id="9FSF"/>
<dbReference type="PDBsum" id="9FY0"/>
<dbReference type="EMDB" id="EMD-50445"/>
<dbReference type="EMDB" id="EMD-50709"/>
<dbReference type="EMDB" id="EMD-50716"/>
<dbReference type="EMDB" id="EMD-50717"/>
<dbReference type="EMDB" id="EMD-50724"/>
<dbReference type="EMDB" id="EMD-50725"/>
<dbReference type="EMDB" id="EMD-50727"/>
<dbReference type="EMDB" id="EMD-50854"/>
<dbReference type="SMR" id="Q980A8"/>
<dbReference type="FunCoup" id="Q980A8">
    <property type="interactions" value="222"/>
</dbReference>
<dbReference type="STRING" id="273057.SSO0408"/>
<dbReference type="PaxDb" id="273057-SSO0408"/>
<dbReference type="EnsemblBacteria" id="AAK40737">
    <property type="protein sequence ID" value="AAK40737"/>
    <property type="gene ID" value="SSO0408"/>
</dbReference>
<dbReference type="KEGG" id="sso:SSO0408"/>
<dbReference type="PATRIC" id="fig|273057.12.peg.404"/>
<dbReference type="eggNOG" id="arCOG04185">
    <property type="taxonomic scope" value="Archaea"/>
</dbReference>
<dbReference type="HOGENOM" id="CLU_090139_2_0_2"/>
<dbReference type="InParanoid" id="Q980A8"/>
<dbReference type="PhylomeDB" id="Q980A8"/>
<dbReference type="Proteomes" id="UP000001974">
    <property type="component" value="Chromosome"/>
</dbReference>
<dbReference type="GO" id="GO:0022627">
    <property type="term" value="C:cytosolic small ribosomal subunit"/>
    <property type="evidence" value="ECO:0000318"/>
    <property type="project" value="GO_Central"/>
</dbReference>
<dbReference type="GO" id="GO:0070181">
    <property type="term" value="F:small ribosomal subunit rRNA binding"/>
    <property type="evidence" value="ECO:0000318"/>
    <property type="project" value="GO_Central"/>
</dbReference>
<dbReference type="GO" id="GO:0003735">
    <property type="term" value="F:structural constituent of ribosome"/>
    <property type="evidence" value="ECO:0000318"/>
    <property type="project" value="GO_Central"/>
</dbReference>
<dbReference type="GO" id="GO:0006412">
    <property type="term" value="P:translation"/>
    <property type="evidence" value="ECO:0007669"/>
    <property type="project" value="UniProtKB-UniRule"/>
</dbReference>
<dbReference type="CDD" id="cd00677">
    <property type="entry name" value="S15_NS1_EPRS_RNA-bind"/>
    <property type="match status" value="1"/>
</dbReference>
<dbReference type="FunFam" id="1.10.287.10:FF:000003">
    <property type="entry name" value="40S ribosomal protein S13"/>
    <property type="match status" value="1"/>
</dbReference>
<dbReference type="FunFam" id="4.10.860.130:FF:000001">
    <property type="entry name" value="40S ribosomal protein S13"/>
    <property type="match status" value="1"/>
</dbReference>
<dbReference type="Gene3D" id="4.10.860.130">
    <property type="match status" value="1"/>
</dbReference>
<dbReference type="Gene3D" id="1.10.287.10">
    <property type="entry name" value="S15/NS1, RNA-binding"/>
    <property type="match status" value="1"/>
</dbReference>
<dbReference type="HAMAP" id="MF_01343_A">
    <property type="entry name" value="Ribosomal_uS15_A"/>
    <property type="match status" value="1"/>
</dbReference>
<dbReference type="InterPro" id="IPR000589">
    <property type="entry name" value="Ribosomal_uS15"/>
</dbReference>
<dbReference type="InterPro" id="IPR023029">
    <property type="entry name" value="Ribosomal_uS15_arc_euk"/>
</dbReference>
<dbReference type="InterPro" id="IPR012606">
    <property type="entry name" value="Ribosomal_uS15_N"/>
</dbReference>
<dbReference type="InterPro" id="IPR009068">
    <property type="entry name" value="uS15_NS1_RNA-bd_sf"/>
</dbReference>
<dbReference type="NCBIfam" id="NF006331">
    <property type="entry name" value="PRK08561.1"/>
    <property type="match status" value="1"/>
</dbReference>
<dbReference type="PANTHER" id="PTHR11885">
    <property type="entry name" value="RIBOSOMAL PROTEIN S15P/S13E"/>
    <property type="match status" value="1"/>
</dbReference>
<dbReference type="PANTHER" id="PTHR11885:SF6">
    <property type="entry name" value="SMALL RIBOSOMAL SUBUNIT PROTEIN US15"/>
    <property type="match status" value="1"/>
</dbReference>
<dbReference type="Pfam" id="PF08069">
    <property type="entry name" value="Ribosomal_S13_N"/>
    <property type="match status" value="1"/>
</dbReference>
<dbReference type="Pfam" id="PF00312">
    <property type="entry name" value="Ribosomal_S15"/>
    <property type="match status" value="1"/>
</dbReference>
<dbReference type="SMART" id="SM01386">
    <property type="entry name" value="Ribosomal_S13_N"/>
    <property type="match status" value="1"/>
</dbReference>
<dbReference type="SMART" id="SM01387">
    <property type="entry name" value="Ribosomal_S15"/>
    <property type="match status" value="1"/>
</dbReference>
<dbReference type="SUPFAM" id="SSF47060">
    <property type="entry name" value="S15/NS1 RNA-binding domain"/>
    <property type="match status" value="1"/>
</dbReference>
<dbReference type="PROSITE" id="PS00362">
    <property type="entry name" value="RIBOSOMAL_S15"/>
    <property type="match status" value="1"/>
</dbReference>
<sequence>MNKRRAKGKSHSIRPARAGAPKWVRLTREEVEMLVEELAKRGYTPSMIGIILRDQYGIPLVKQIVGKKVTQILEERGLAPQIPEDLFNLIRKAVNVRRHINEYPRDKTAKKGLEEIESKIRRLTRYYKGIGKLPQEWVYDPAKAELLVAGAS</sequence>
<gene>
    <name evidence="1" type="primary">rps15</name>
    <name type="synonym">rps13e</name>
    <name type="ordered locus">SSO0408</name>
</gene>